<gene>
    <name evidence="1" type="primary">metG</name>
    <name type="ordered locus">VIBHAR_02927</name>
</gene>
<protein>
    <recommendedName>
        <fullName evidence="1">Methionine--tRNA ligase</fullName>
        <ecNumber evidence="1">6.1.1.10</ecNumber>
    </recommendedName>
    <alternativeName>
        <fullName evidence="1">Methionyl-tRNA synthetase</fullName>
        <shortName evidence="1">MetRS</shortName>
    </alternativeName>
</protein>
<dbReference type="EC" id="6.1.1.10" evidence="1"/>
<dbReference type="EMBL" id="CP000789">
    <property type="protein sequence ID" value="ABU71880.1"/>
    <property type="status" value="ALT_INIT"/>
    <property type="molecule type" value="Genomic_DNA"/>
</dbReference>
<dbReference type="RefSeq" id="WP_021018027.1">
    <property type="nucleotide sequence ID" value="NC_009783.1"/>
</dbReference>
<dbReference type="SMR" id="A7MZT3"/>
<dbReference type="KEGG" id="vha:VIBHAR_02927"/>
<dbReference type="PATRIC" id="fig|338187.25.peg.3259"/>
<dbReference type="Proteomes" id="UP000008152">
    <property type="component" value="Chromosome I"/>
</dbReference>
<dbReference type="GO" id="GO:0005829">
    <property type="term" value="C:cytosol"/>
    <property type="evidence" value="ECO:0007669"/>
    <property type="project" value="TreeGrafter"/>
</dbReference>
<dbReference type="GO" id="GO:0005524">
    <property type="term" value="F:ATP binding"/>
    <property type="evidence" value="ECO:0007669"/>
    <property type="project" value="UniProtKB-UniRule"/>
</dbReference>
<dbReference type="GO" id="GO:0046872">
    <property type="term" value="F:metal ion binding"/>
    <property type="evidence" value="ECO:0007669"/>
    <property type="project" value="UniProtKB-KW"/>
</dbReference>
<dbReference type="GO" id="GO:0004825">
    <property type="term" value="F:methionine-tRNA ligase activity"/>
    <property type="evidence" value="ECO:0007669"/>
    <property type="project" value="UniProtKB-UniRule"/>
</dbReference>
<dbReference type="GO" id="GO:0000049">
    <property type="term" value="F:tRNA binding"/>
    <property type="evidence" value="ECO:0007669"/>
    <property type="project" value="UniProtKB-KW"/>
</dbReference>
<dbReference type="GO" id="GO:0006431">
    <property type="term" value="P:methionyl-tRNA aminoacylation"/>
    <property type="evidence" value="ECO:0007669"/>
    <property type="project" value="UniProtKB-UniRule"/>
</dbReference>
<dbReference type="CDD" id="cd07957">
    <property type="entry name" value="Anticodon_Ia_Met"/>
    <property type="match status" value="1"/>
</dbReference>
<dbReference type="CDD" id="cd00814">
    <property type="entry name" value="MetRS_core"/>
    <property type="match status" value="1"/>
</dbReference>
<dbReference type="CDD" id="cd02800">
    <property type="entry name" value="tRNA_bind_EcMetRS_like"/>
    <property type="match status" value="1"/>
</dbReference>
<dbReference type="FunFam" id="1.10.730.10:FF:000005">
    <property type="entry name" value="Methionine--tRNA ligase"/>
    <property type="match status" value="1"/>
</dbReference>
<dbReference type="FunFam" id="2.20.28.20:FF:000001">
    <property type="entry name" value="Methionine--tRNA ligase"/>
    <property type="match status" value="1"/>
</dbReference>
<dbReference type="FunFam" id="2.40.50.140:FF:000042">
    <property type="entry name" value="Methionine--tRNA ligase"/>
    <property type="match status" value="1"/>
</dbReference>
<dbReference type="Gene3D" id="3.40.50.620">
    <property type="entry name" value="HUPs"/>
    <property type="match status" value="1"/>
</dbReference>
<dbReference type="Gene3D" id="1.10.730.10">
    <property type="entry name" value="Isoleucyl-tRNA Synthetase, Domain 1"/>
    <property type="match status" value="1"/>
</dbReference>
<dbReference type="Gene3D" id="2.20.28.20">
    <property type="entry name" value="Methionyl-tRNA synthetase, Zn-domain"/>
    <property type="match status" value="1"/>
</dbReference>
<dbReference type="Gene3D" id="2.40.50.140">
    <property type="entry name" value="Nucleic acid-binding proteins"/>
    <property type="match status" value="1"/>
</dbReference>
<dbReference type="HAMAP" id="MF_00098">
    <property type="entry name" value="Met_tRNA_synth_type1"/>
    <property type="match status" value="1"/>
</dbReference>
<dbReference type="InterPro" id="IPR001412">
    <property type="entry name" value="aa-tRNA-synth_I_CS"/>
</dbReference>
<dbReference type="InterPro" id="IPR041872">
    <property type="entry name" value="Anticodon_Met"/>
</dbReference>
<dbReference type="InterPro" id="IPR004495">
    <property type="entry name" value="Met-tRNA-synth_bsu_C"/>
</dbReference>
<dbReference type="InterPro" id="IPR023458">
    <property type="entry name" value="Met-tRNA_ligase_1"/>
</dbReference>
<dbReference type="InterPro" id="IPR014758">
    <property type="entry name" value="Met-tRNA_synth"/>
</dbReference>
<dbReference type="InterPro" id="IPR015413">
    <property type="entry name" value="Methionyl/Leucyl_tRNA_Synth"/>
</dbReference>
<dbReference type="InterPro" id="IPR033911">
    <property type="entry name" value="MetRS_core"/>
</dbReference>
<dbReference type="InterPro" id="IPR029038">
    <property type="entry name" value="MetRS_Zn"/>
</dbReference>
<dbReference type="InterPro" id="IPR012340">
    <property type="entry name" value="NA-bd_OB-fold"/>
</dbReference>
<dbReference type="InterPro" id="IPR014729">
    <property type="entry name" value="Rossmann-like_a/b/a_fold"/>
</dbReference>
<dbReference type="InterPro" id="IPR002547">
    <property type="entry name" value="tRNA-bd_dom"/>
</dbReference>
<dbReference type="InterPro" id="IPR009080">
    <property type="entry name" value="tRNAsynth_Ia_anticodon-bd"/>
</dbReference>
<dbReference type="NCBIfam" id="TIGR00398">
    <property type="entry name" value="metG"/>
    <property type="match status" value="1"/>
</dbReference>
<dbReference type="NCBIfam" id="TIGR00399">
    <property type="entry name" value="metG_C_term"/>
    <property type="match status" value="1"/>
</dbReference>
<dbReference type="NCBIfam" id="NF001100">
    <property type="entry name" value="PRK00133.1"/>
    <property type="match status" value="1"/>
</dbReference>
<dbReference type="PANTHER" id="PTHR45765">
    <property type="entry name" value="METHIONINE--TRNA LIGASE"/>
    <property type="match status" value="1"/>
</dbReference>
<dbReference type="PANTHER" id="PTHR45765:SF1">
    <property type="entry name" value="METHIONINE--TRNA LIGASE, CYTOPLASMIC"/>
    <property type="match status" value="1"/>
</dbReference>
<dbReference type="Pfam" id="PF19303">
    <property type="entry name" value="Anticodon_3"/>
    <property type="match status" value="1"/>
</dbReference>
<dbReference type="Pfam" id="PF09334">
    <property type="entry name" value="tRNA-synt_1g"/>
    <property type="match status" value="1"/>
</dbReference>
<dbReference type="Pfam" id="PF01588">
    <property type="entry name" value="tRNA_bind"/>
    <property type="match status" value="1"/>
</dbReference>
<dbReference type="PRINTS" id="PR01041">
    <property type="entry name" value="TRNASYNTHMET"/>
</dbReference>
<dbReference type="SUPFAM" id="SSF47323">
    <property type="entry name" value="Anticodon-binding domain of a subclass of class I aminoacyl-tRNA synthetases"/>
    <property type="match status" value="1"/>
</dbReference>
<dbReference type="SUPFAM" id="SSF57770">
    <property type="entry name" value="Methionyl-tRNA synthetase (MetRS), Zn-domain"/>
    <property type="match status" value="1"/>
</dbReference>
<dbReference type="SUPFAM" id="SSF50249">
    <property type="entry name" value="Nucleic acid-binding proteins"/>
    <property type="match status" value="1"/>
</dbReference>
<dbReference type="SUPFAM" id="SSF52374">
    <property type="entry name" value="Nucleotidylyl transferase"/>
    <property type="match status" value="1"/>
</dbReference>
<dbReference type="PROSITE" id="PS00178">
    <property type="entry name" value="AA_TRNA_LIGASE_I"/>
    <property type="match status" value="1"/>
</dbReference>
<dbReference type="PROSITE" id="PS50886">
    <property type="entry name" value="TRBD"/>
    <property type="match status" value="1"/>
</dbReference>
<proteinExistence type="inferred from homology"/>
<evidence type="ECO:0000255" key="1">
    <source>
        <dbReference type="HAMAP-Rule" id="MF_00098"/>
    </source>
</evidence>
<evidence type="ECO:0000305" key="2"/>
<organism>
    <name type="scientific">Vibrio campbellii (strain ATCC BAA-1116)</name>
    <dbReference type="NCBI Taxonomy" id="2902295"/>
    <lineage>
        <taxon>Bacteria</taxon>
        <taxon>Pseudomonadati</taxon>
        <taxon>Pseudomonadota</taxon>
        <taxon>Gammaproteobacteria</taxon>
        <taxon>Vibrionales</taxon>
        <taxon>Vibrionaceae</taxon>
        <taxon>Vibrio</taxon>
    </lineage>
</organism>
<accession>A7MZT3</accession>
<keyword id="KW-0030">Aminoacyl-tRNA synthetase</keyword>
<keyword id="KW-0067">ATP-binding</keyword>
<keyword id="KW-0963">Cytoplasm</keyword>
<keyword id="KW-0436">Ligase</keyword>
<keyword id="KW-0479">Metal-binding</keyword>
<keyword id="KW-0547">Nucleotide-binding</keyword>
<keyword id="KW-0648">Protein biosynthesis</keyword>
<keyword id="KW-0694">RNA-binding</keyword>
<keyword id="KW-0820">tRNA-binding</keyword>
<keyword id="KW-0862">Zinc</keyword>
<comment type="function">
    <text evidence="1">Is required not only for elongation of protein synthesis but also for the initiation of all mRNA translation through initiator tRNA(fMet) aminoacylation.</text>
</comment>
<comment type="catalytic activity">
    <reaction evidence="1">
        <text>tRNA(Met) + L-methionine + ATP = L-methionyl-tRNA(Met) + AMP + diphosphate</text>
        <dbReference type="Rhea" id="RHEA:13481"/>
        <dbReference type="Rhea" id="RHEA-COMP:9667"/>
        <dbReference type="Rhea" id="RHEA-COMP:9698"/>
        <dbReference type="ChEBI" id="CHEBI:30616"/>
        <dbReference type="ChEBI" id="CHEBI:33019"/>
        <dbReference type="ChEBI" id="CHEBI:57844"/>
        <dbReference type="ChEBI" id="CHEBI:78442"/>
        <dbReference type="ChEBI" id="CHEBI:78530"/>
        <dbReference type="ChEBI" id="CHEBI:456215"/>
        <dbReference type="EC" id="6.1.1.10"/>
    </reaction>
</comment>
<comment type="cofactor">
    <cofactor evidence="1">
        <name>Zn(2+)</name>
        <dbReference type="ChEBI" id="CHEBI:29105"/>
    </cofactor>
    <text evidence="1">Binds 1 zinc ion per subunit.</text>
</comment>
<comment type="subunit">
    <text evidence="1">Homodimer.</text>
</comment>
<comment type="subcellular location">
    <subcellularLocation>
        <location evidence="1">Cytoplasm</location>
    </subcellularLocation>
</comment>
<comment type="similarity">
    <text evidence="1">Belongs to the class-I aminoacyl-tRNA synthetase family. MetG type 1 subfamily.</text>
</comment>
<comment type="sequence caution" evidence="2">
    <conflict type="erroneous initiation">
        <sequence resource="EMBL-CDS" id="ABU71880"/>
    </conflict>
</comment>
<feature type="chain" id="PRO_0000331926" description="Methionine--tRNA ligase">
    <location>
        <begin position="1"/>
        <end position="686"/>
    </location>
</feature>
<feature type="domain" description="tRNA-binding" evidence="1">
    <location>
        <begin position="585"/>
        <end position="686"/>
    </location>
</feature>
<feature type="short sequence motif" description="'HIGH' region">
    <location>
        <begin position="15"/>
        <end position="25"/>
    </location>
</feature>
<feature type="short sequence motif" description="'KMSKS' region">
    <location>
        <begin position="332"/>
        <end position="336"/>
    </location>
</feature>
<feature type="binding site" evidence="1">
    <location>
        <position position="146"/>
    </location>
    <ligand>
        <name>Zn(2+)</name>
        <dbReference type="ChEBI" id="CHEBI:29105"/>
    </ligand>
</feature>
<feature type="binding site" evidence="1">
    <location>
        <position position="149"/>
    </location>
    <ligand>
        <name>Zn(2+)</name>
        <dbReference type="ChEBI" id="CHEBI:29105"/>
    </ligand>
</feature>
<feature type="binding site" evidence="1">
    <location>
        <position position="159"/>
    </location>
    <ligand>
        <name>Zn(2+)</name>
        <dbReference type="ChEBI" id="CHEBI:29105"/>
    </ligand>
</feature>
<feature type="binding site" evidence="1">
    <location>
        <position position="162"/>
    </location>
    <ligand>
        <name>Zn(2+)</name>
        <dbReference type="ChEBI" id="CHEBI:29105"/>
    </ligand>
</feature>
<feature type="binding site" evidence="1">
    <location>
        <position position="335"/>
    </location>
    <ligand>
        <name>ATP</name>
        <dbReference type="ChEBI" id="CHEBI:30616"/>
    </ligand>
</feature>
<reference key="1">
    <citation type="submission" date="2007-08" db="EMBL/GenBank/DDBJ databases">
        <authorList>
            <consortium name="The Vibrio harveyi Genome Sequencing Project"/>
            <person name="Bassler B."/>
            <person name="Clifton S.W."/>
            <person name="Fulton L."/>
            <person name="Delehaunty K."/>
            <person name="Fronick C."/>
            <person name="Harrison M."/>
            <person name="Markivic C."/>
            <person name="Fulton R."/>
            <person name="Tin-Wollam A.-M."/>
            <person name="Shah N."/>
            <person name="Pepin K."/>
            <person name="Nash W."/>
            <person name="Thiruvilangam P."/>
            <person name="Bhonagiri V."/>
            <person name="Waters C."/>
            <person name="Tu K.C."/>
            <person name="Irgon J."/>
            <person name="Wilson R.K."/>
        </authorList>
    </citation>
    <scope>NUCLEOTIDE SEQUENCE [LARGE SCALE GENOMIC DNA]</scope>
    <source>
        <strain>ATCC BAA-1116 / BB120</strain>
    </source>
</reference>
<name>SYM_VIBC1</name>
<sequence length="686" mass="77625">MANDPRKLLVTCALPYANGSIHLGHMLEHIQADIWVRYQRLRGNTVNFICADDAHGTPIMLKAQQMGITPEEMIAAVSEEHQKDFAGFDISFDNYHSTHSEENRELASHIYLELKKNGFISSRTISQLFDPEKEMFLPDRFVKGTCPKCKSEDQYGDNCDNCGETYSPTELIDPKSAVSGATPVMKDSEHFFFDLPQFESMLKEWTRSGSLQSETANKMQEWFESGLQQWDISRDAPYFGFEIPGEENKFFYVWLDAPVGYMASFKNLCDKTEGLDFDEYWKKDSSTELYHFIGKDIVYFHSLFWPAMLEGSGFRKPNNVFVHGYVTVNGAKMSKSKGTFVKASTYLKHLDPECLRYYYAAKLNSRIDDLDLNLEDFTQRVNADVVNKIVNLASRNAGFISKRFEGKLAENFAEPELYNEFVAAADRIAELYETREFGRAIREITALADKANQYVDEKAPWVVAKEEGKDQELQEICSVGINLFRVLMTYLKPVMPALAARTEAFLNQELTWEGIAAPLTGHEITKFKALFNRIDPKNIEAMIEASKEDAAAEMAAKEKAEAEKNKASQTELDKDPIAEEIEFDAFAAVDMRIARIISCEEVPKANKLLKFQLDIGGETRQVFSGIKSAYKPEELEGKLTVMVANLKPRKMKFGMSEGMILAAGPGGSDLWILEPHEGAQPGMRVM</sequence>